<comment type="function">
    <text evidence="1">Catalyzes the hydrolysis of the adenine ring of phosphoribosyl-AMP.</text>
</comment>
<comment type="catalytic activity">
    <reaction evidence="1">
        <text>1-(5-phospho-beta-D-ribosyl)-5'-AMP + H2O = 1-(5-phospho-beta-D-ribosyl)-5-[(5-phospho-beta-D-ribosylamino)methylideneamino]imidazole-4-carboxamide</text>
        <dbReference type="Rhea" id="RHEA:20049"/>
        <dbReference type="ChEBI" id="CHEBI:15377"/>
        <dbReference type="ChEBI" id="CHEBI:58435"/>
        <dbReference type="ChEBI" id="CHEBI:59457"/>
        <dbReference type="EC" id="3.5.4.19"/>
    </reaction>
</comment>
<comment type="cofactor">
    <cofactor evidence="1">
        <name>Mg(2+)</name>
        <dbReference type="ChEBI" id="CHEBI:18420"/>
    </cofactor>
    <text evidence="1">Binds 1 Mg(2+) ion per subunit.</text>
</comment>
<comment type="cofactor">
    <cofactor evidence="1">
        <name>Zn(2+)</name>
        <dbReference type="ChEBI" id="CHEBI:29105"/>
    </cofactor>
    <text evidence="1">Binds 1 zinc ion per subunit.</text>
</comment>
<comment type="pathway">
    <text evidence="1">Amino-acid biosynthesis; L-histidine biosynthesis; L-histidine from 5-phospho-alpha-D-ribose 1-diphosphate: step 3/9.</text>
</comment>
<comment type="subunit">
    <text evidence="1">Homodimer.</text>
</comment>
<comment type="subcellular location">
    <subcellularLocation>
        <location evidence="1">Cytoplasm</location>
    </subcellularLocation>
</comment>
<comment type="similarity">
    <text evidence="1">Belongs to the PRA-CH family.</text>
</comment>
<name>HIS3_CHLCH</name>
<keyword id="KW-0028">Amino-acid biosynthesis</keyword>
<keyword id="KW-0963">Cytoplasm</keyword>
<keyword id="KW-0368">Histidine biosynthesis</keyword>
<keyword id="KW-0378">Hydrolase</keyword>
<keyword id="KW-0460">Magnesium</keyword>
<keyword id="KW-0479">Metal-binding</keyword>
<keyword id="KW-0862">Zinc</keyword>
<gene>
    <name evidence="1" type="primary">hisI</name>
    <name type="ordered locus">Cag_0559</name>
</gene>
<accession>Q3AT43</accession>
<sequence>MNNSLESTKQLLDVVKFDSNGLVPAIVQDVESGKVLMMAWMNRESLAMTLEKKVACYWSRSRKELWLKGETSGNMQQVHDVLIDCDGDTLLLKVSQKGGACHVGYHSCFYRKATENGSLEICDTLMFNPEEVYGKKS</sequence>
<proteinExistence type="inferred from homology"/>
<feature type="chain" id="PRO_0000229817" description="Phosphoribosyl-AMP cyclohydrolase">
    <location>
        <begin position="1"/>
        <end position="137"/>
    </location>
</feature>
<feature type="binding site" evidence="1">
    <location>
        <position position="84"/>
    </location>
    <ligand>
        <name>Mg(2+)</name>
        <dbReference type="ChEBI" id="CHEBI:18420"/>
    </ligand>
</feature>
<feature type="binding site" evidence="1">
    <location>
        <position position="85"/>
    </location>
    <ligand>
        <name>Zn(2+)</name>
        <dbReference type="ChEBI" id="CHEBI:29105"/>
        <note>ligand shared between dimeric partners</note>
    </ligand>
</feature>
<feature type="binding site" evidence="1">
    <location>
        <position position="86"/>
    </location>
    <ligand>
        <name>Mg(2+)</name>
        <dbReference type="ChEBI" id="CHEBI:18420"/>
    </ligand>
</feature>
<feature type="binding site" evidence="1">
    <location>
        <position position="88"/>
    </location>
    <ligand>
        <name>Mg(2+)</name>
        <dbReference type="ChEBI" id="CHEBI:18420"/>
    </ligand>
</feature>
<feature type="binding site" evidence="1">
    <location>
        <position position="101"/>
    </location>
    <ligand>
        <name>Zn(2+)</name>
        <dbReference type="ChEBI" id="CHEBI:29105"/>
        <note>ligand shared between dimeric partners</note>
    </ligand>
</feature>
<feature type="binding site" evidence="1">
    <location>
        <position position="108"/>
    </location>
    <ligand>
        <name>Zn(2+)</name>
        <dbReference type="ChEBI" id="CHEBI:29105"/>
        <note>ligand shared between dimeric partners</note>
    </ligand>
</feature>
<organism>
    <name type="scientific">Chlorobium chlorochromatii (strain CaD3)</name>
    <dbReference type="NCBI Taxonomy" id="340177"/>
    <lineage>
        <taxon>Bacteria</taxon>
        <taxon>Pseudomonadati</taxon>
        <taxon>Chlorobiota</taxon>
        <taxon>Chlorobiia</taxon>
        <taxon>Chlorobiales</taxon>
        <taxon>Chlorobiaceae</taxon>
        <taxon>Chlorobium/Pelodictyon group</taxon>
        <taxon>Chlorobium</taxon>
    </lineage>
</organism>
<reference key="1">
    <citation type="submission" date="2005-08" db="EMBL/GenBank/DDBJ databases">
        <title>Complete sequence of Chlorobium chlorochromatii CaD3.</title>
        <authorList>
            <consortium name="US DOE Joint Genome Institute"/>
            <person name="Copeland A."/>
            <person name="Lucas S."/>
            <person name="Lapidus A."/>
            <person name="Barry K."/>
            <person name="Detter J.C."/>
            <person name="Glavina T."/>
            <person name="Hammon N."/>
            <person name="Israni S."/>
            <person name="Pitluck S."/>
            <person name="Bryant D."/>
            <person name="Schmutz J."/>
            <person name="Larimer F."/>
            <person name="Land M."/>
            <person name="Kyrpides N."/>
            <person name="Ivanova N."/>
            <person name="Richardson P."/>
        </authorList>
    </citation>
    <scope>NUCLEOTIDE SEQUENCE [LARGE SCALE GENOMIC DNA]</scope>
    <source>
        <strain>CaD3</strain>
    </source>
</reference>
<evidence type="ECO:0000255" key="1">
    <source>
        <dbReference type="HAMAP-Rule" id="MF_01021"/>
    </source>
</evidence>
<protein>
    <recommendedName>
        <fullName evidence="1">Phosphoribosyl-AMP cyclohydrolase</fullName>
        <shortName evidence="1">PRA-CH</shortName>
        <ecNumber evidence="1">3.5.4.19</ecNumber>
    </recommendedName>
</protein>
<dbReference type="EC" id="3.5.4.19" evidence="1"/>
<dbReference type="EMBL" id="CP000108">
    <property type="protein sequence ID" value="ABB27832.1"/>
    <property type="molecule type" value="Genomic_DNA"/>
</dbReference>
<dbReference type="SMR" id="Q3AT43"/>
<dbReference type="STRING" id="340177.Cag_0559"/>
<dbReference type="KEGG" id="cch:Cag_0559"/>
<dbReference type="eggNOG" id="COG0139">
    <property type="taxonomic scope" value="Bacteria"/>
</dbReference>
<dbReference type="HOGENOM" id="CLU_048577_5_0_10"/>
<dbReference type="OrthoDB" id="9795769at2"/>
<dbReference type="UniPathway" id="UPA00031">
    <property type="reaction ID" value="UER00008"/>
</dbReference>
<dbReference type="GO" id="GO:0005737">
    <property type="term" value="C:cytoplasm"/>
    <property type="evidence" value="ECO:0007669"/>
    <property type="project" value="UniProtKB-SubCell"/>
</dbReference>
<dbReference type="GO" id="GO:0000287">
    <property type="term" value="F:magnesium ion binding"/>
    <property type="evidence" value="ECO:0007669"/>
    <property type="project" value="UniProtKB-UniRule"/>
</dbReference>
<dbReference type="GO" id="GO:0004635">
    <property type="term" value="F:phosphoribosyl-AMP cyclohydrolase activity"/>
    <property type="evidence" value="ECO:0007669"/>
    <property type="project" value="UniProtKB-UniRule"/>
</dbReference>
<dbReference type="GO" id="GO:0008270">
    <property type="term" value="F:zinc ion binding"/>
    <property type="evidence" value="ECO:0007669"/>
    <property type="project" value="UniProtKB-UniRule"/>
</dbReference>
<dbReference type="GO" id="GO:0000105">
    <property type="term" value="P:L-histidine biosynthetic process"/>
    <property type="evidence" value="ECO:0007669"/>
    <property type="project" value="UniProtKB-UniRule"/>
</dbReference>
<dbReference type="FunFam" id="3.10.20.810:FF:000001">
    <property type="entry name" value="Histidine biosynthesis bifunctional protein HisIE"/>
    <property type="match status" value="1"/>
</dbReference>
<dbReference type="Gene3D" id="3.10.20.810">
    <property type="entry name" value="Phosphoribosyl-AMP cyclohydrolase"/>
    <property type="match status" value="1"/>
</dbReference>
<dbReference type="HAMAP" id="MF_01021">
    <property type="entry name" value="HisI"/>
    <property type="match status" value="1"/>
</dbReference>
<dbReference type="InterPro" id="IPR026660">
    <property type="entry name" value="PRA-CH"/>
</dbReference>
<dbReference type="InterPro" id="IPR002496">
    <property type="entry name" value="PRib_AMP_CycHydrolase_dom"/>
</dbReference>
<dbReference type="InterPro" id="IPR038019">
    <property type="entry name" value="PRib_AMP_CycHydrolase_sf"/>
</dbReference>
<dbReference type="NCBIfam" id="NF000768">
    <property type="entry name" value="PRK00051.1"/>
    <property type="match status" value="1"/>
</dbReference>
<dbReference type="PANTHER" id="PTHR42945">
    <property type="entry name" value="HISTIDINE BIOSYNTHESIS BIFUNCTIONAL PROTEIN"/>
    <property type="match status" value="1"/>
</dbReference>
<dbReference type="PANTHER" id="PTHR42945:SF1">
    <property type="entry name" value="HISTIDINE BIOSYNTHESIS BIFUNCTIONAL PROTEIN HIS7"/>
    <property type="match status" value="1"/>
</dbReference>
<dbReference type="Pfam" id="PF01502">
    <property type="entry name" value="PRA-CH"/>
    <property type="match status" value="1"/>
</dbReference>
<dbReference type="SUPFAM" id="SSF141734">
    <property type="entry name" value="HisI-like"/>
    <property type="match status" value="1"/>
</dbReference>